<evidence type="ECO:0000255" key="1">
    <source>
        <dbReference type="HAMAP-Rule" id="MF_01172"/>
    </source>
</evidence>
<protein>
    <recommendedName>
        <fullName evidence="1">N-succinylarginine dihydrolase</fullName>
        <ecNumber evidence="1">3.5.3.23</ecNumber>
    </recommendedName>
</protein>
<keyword id="KW-0056">Arginine metabolism</keyword>
<keyword id="KW-0378">Hydrolase</keyword>
<keyword id="KW-1185">Reference proteome</keyword>
<reference key="1">
    <citation type="journal article" date="1997" name="J. Bacteriol.">
        <title>Cloning and characterization of the aru genes encoding enzymes of the catabolic arginine succinyltransferase pathway in Pseudomonas aeruginosa.</title>
        <authorList>
            <person name="Itoh Y."/>
        </authorList>
    </citation>
    <scope>NUCLEOTIDE SEQUENCE [GENOMIC DNA]</scope>
    <source>
        <strain>ATCC 15692 / DSM 22644 / CIP 104116 / JCM 14847 / LMG 12228 / 1C / PRS 101 / PAO1</strain>
    </source>
</reference>
<reference key="2">
    <citation type="journal article" date="2000" name="Nature">
        <title>Complete genome sequence of Pseudomonas aeruginosa PAO1, an opportunistic pathogen.</title>
        <authorList>
            <person name="Stover C.K."/>
            <person name="Pham X.-Q.T."/>
            <person name="Erwin A.L."/>
            <person name="Mizoguchi S.D."/>
            <person name="Warrener P."/>
            <person name="Hickey M.J."/>
            <person name="Brinkman F.S.L."/>
            <person name="Hufnagle W.O."/>
            <person name="Kowalik D.J."/>
            <person name="Lagrou M."/>
            <person name="Garber R.L."/>
            <person name="Goltry L."/>
            <person name="Tolentino E."/>
            <person name="Westbrock-Wadman S."/>
            <person name="Yuan Y."/>
            <person name="Brody L.L."/>
            <person name="Coulter S.N."/>
            <person name="Folger K.R."/>
            <person name="Kas A."/>
            <person name="Larbig K."/>
            <person name="Lim R.M."/>
            <person name="Smith K.A."/>
            <person name="Spencer D.H."/>
            <person name="Wong G.K.-S."/>
            <person name="Wu Z."/>
            <person name="Paulsen I.T."/>
            <person name="Reizer J."/>
            <person name="Saier M.H. Jr."/>
            <person name="Hancock R.E.W."/>
            <person name="Lory S."/>
            <person name="Olson M.V."/>
        </authorList>
    </citation>
    <scope>NUCLEOTIDE SEQUENCE [LARGE SCALE GENOMIC DNA]</scope>
    <source>
        <strain>ATCC 15692 / DSM 22644 / CIP 104116 / JCM 14847 / LMG 12228 / 1C / PRS 101 / PAO1</strain>
    </source>
</reference>
<feature type="chain" id="PRO_0000064716" description="N-succinylarginine dihydrolase">
    <location>
        <begin position="1"/>
        <end position="448"/>
    </location>
</feature>
<feature type="active site" evidence="1">
    <location>
        <position position="174"/>
    </location>
</feature>
<feature type="active site" evidence="1">
    <location>
        <position position="250"/>
    </location>
</feature>
<feature type="active site" description="Nucleophile" evidence="1">
    <location>
        <position position="371"/>
    </location>
</feature>
<feature type="binding site" evidence="1">
    <location>
        <begin position="19"/>
        <end position="28"/>
    </location>
    <ligand>
        <name>substrate</name>
    </ligand>
</feature>
<feature type="binding site" evidence="1">
    <location>
        <position position="110"/>
    </location>
    <ligand>
        <name>substrate</name>
    </ligand>
</feature>
<feature type="binding site" evidence="1">
    <location>
        <begin position="137"/>
        <end position="138"/>
    </location>
    <ligand>
        <name>substrate</name>
    </ligand>
</feature>
<feature type="binding site" evidence="1">
    <location>
        <position position="214"/>
    </location>
    <ligand>
        <name>substrate</name>
    </ligand>
</feature>
<feature type="binding site" evidence="1">
    <location>
        <position position="252"/>
    </location>
    <ligand>
        <name>substrate</name>
    </ligand>
</feature>
<feature type="binding site" evidence="1">
    <location>
        <position position="365"/>
    </location>
    <ligand>
        <name>substrate</name>
    </ligand>
</feature>
<organism>
    <name type="scientific">Pseudomonas aeruginosa (strain ATCC 15692 / DSM 22644 / CIP 104116 / JCM 14847 / LMG 12228 / 1C / PRS 101 / PAO1)</name>
    <dbReference type="NCBI Taxonomy" id="208964"/>
    <lineage>
        <taxon>Bacteria</taxon>
        <taxon>Pseudomonadati</taxon>
        <taxon>Pseudomonadota</taxon>
        <taxon>Gammaproteobacteria</taxon>
        <taxon>Pseudomonadales</taxon>
        <taxon>Pseudomonadaceae</taxon>
        <taxon>Pseudomonas</taxon>
    </lineage>
</organism>
<gene>
    <name evidence="1" type="primary">astB</name>
    <name type="synonym">aruB</name>
    <name type="ordered locus">PA0899</name>
</gene>
<accession>O50175</accession>
<comment type="function">
    <text>Catalyzes the hydrolysis of N(2)-succinylarginine into N(2)-succinylornithine, ammonia and CO(2).</text>
</comment>
<comment type="catalytic activity">
    <reaction evidence="1">
        <text>N(2)-succinyl-L-arginine + 2 H2O + 2 H(+) = N(2)-succinyl-L-ornithine + 2 NH4(+) + CO2</text>
        <dbReference type="Rhea" id="RHEA:19533"/>
        <dbReference type="ChEBI" id="CHEBI:15377"/>
        <dbReference type="ChEBI" id="CHEBI:15378"/>
        <dbReference type="ChEBI" id="CHEBI:16526"/>
        <dbReference type="ChEBI" id="CHEBI:28938"/>
        <dbReference type="ChEBI" id="CHEBI:58241"/>
        <dbReference type="ChEBI" id="CHEBI:58514"/>
        <dbReference type="EC" id="3.5.3.23"/>
    </reaction>
</comment>
<comment type="pathway">
    <text evidence="1">Amino-acid degradation; L-arginine degradation via AST pathway; L-glutamate and succinate from L-arginine: step 2/5.</text>
</comment>
<comment type="subunit">
    <text evidence="1">Homodimer.</text>
</comment>
<comment type="similarity">
    <text evidence="1">Belongs to the succinylarginine dihydrolase family.</text>
</comment>
<sequence>MNAHEVNFDGLVGPTHNYGGLSYGNVASQSNSQAVSNPKEAAKQGLAKMKALMEMGFKQGVLAPQARPDTAALRSLGFSGSDEEVIRRAAKEAMPLLAACSSASSMWTANAATVSPSADTADGRVHFTAANLNCKFHRSIEHPTTSRVLAAMFNDERHFAHHAALPAVSQFGDEGAANHTRFCKDYGDAGVEFFVFGRSAFDSRFPAPQRYPARQTLEACQAVARLHGLSEAGVVYAQQNPAVIDQGVFHNDVISVGNGEVLFHHEDAFLDTEKVLAELHDKLGRRGGRFRAICVPRDQVAVEDAVKSYLFNSQLLSKADGSMLLVVPEECRNNPRVWNYLDQLTGDDGPIREVKVFDLKQSMQNGGGPACLRLRVALQERELAAVNPGVIMSAGLYDTLVAWVDRHYRDRLSETDLADPQLLLECRTALDELTQILKLGSVYSFQLD</sequence>
<name>ASTB_PSEAE</name>
<dbReference type="EC" id="3.5.3.23" evidence="1"/>
<dbReference type="EMBL" id="AF011922">
    <property type="protein sequence ID" value="AAC46013.1"/>
    <property type="molecule type" value="Genomic_DNA"/>
</dbReference>
<dbReference type="EMBL" id="AE004091">
    <property type="protein sequence ID" value="AAG04288.1"/>
    <property type="molecule type" value="Genomic_DNA"/>
</dbReference>
<dbReference type="PIR" id="D83533">
    <property type="entry name" value="D83533"/>
</dbReference>
<dbReference type="RefSeq" id="NP_249590.1">
    <property type="nucleotide sequence ID" value="NC_002516.2"/>
</dbReference>
<dbReference type="RefSeq" id="WP_003085956.1">
    <property type="nucleotide sequence ID" value="NZ_QZGE01000007.1"/>
</dbReference>
<dbReference type="SMR" id="O50175"/>
<dbReference type="FunCoup" id="O50175">
    <property type="interactions" value="23"/>
</dbReference>
<dbReference type="STRING" id="208964.PA0899"/>
<dbReference type="PaxDb" id="208964-PA0899"/>
<dbReference type="GeneID" id="878588"/>
<dbReference type="KEGG" id="pae:PA0899"/>
<dbReference type="PATRIC" id="fig|208964.12.peg.934"/>
<dbReference type="PseudoCAP" id="PA0899"/>
<dbReference type="HOGENOM" id="CLU_053835_0_0_6"/>
<dbReference type="InParanoid" id="O50175"/>
<dbReference type="OrthoDB" id="248552at2"/>
<dbReference type="PhylomeDB" id="O50175"/>
<dbReference type="BioCyc" id="PAER208964:G1FZ6-915-MONOMER"/>
<dbReference type="UniPathway" id="UPA00185">
    <property type="reaction ID" value="UER00280"/>
</dbReference>
<dbReference type="Proteomes" id="UP000002438">
    <property type="component" value="Chromosome"/>
</dbReference>
<dbReference type="GO" id="GO:0009015">
    <property type="term" value="F:N-succinylarginine dihydrolase activity"/>
    <property type="evidence" value="ECO:0000318"/>
    <property type="project" value="GO_Central"/>
</dbReference>
<dbReference type="GO" id="GO:0006527">
    <property type="term" value="P:arginine catabolic process"/>
    <property type="evidence" value="ECO:0000314"/>
    <property type="project" value="PseudoCAP"/>
</dbReference>
<dbReference type="GO" id="GO:0019544">
    <property type="term" value="P:arginine catabolic process to glutamate"/>
    <property type="evidence" value="ECO:0007669"/>
    <property type="project" value="UniProtKB-UniRule"/>
</dbReference>
<dbReference type="GO" id="GO:0019545">
    <property type="term" value="P:arginine catabolic process to succinate"/>
    <property type="evidence" value="ECO:0007669"/>
    <property type="project" value="UniProtKB-UniRule"/>
</dbReference>
<dbReference type="FunFam" id="3.75.10.20:FF:000001">
    <property type="entry name" value="N-succinylarginine dihydrolase"/>
    <property type="match status" value="1"/>
</dbReference>
<dbReference type="Gene3D" id="3.75.10.20">
    <property type="entry name" value="Succinylarginine dihydrolase"/>
    <property type="match status" value="1"/>
</dbReference>
<dbReference type="HAMAP" id="MF_01172">
    <property type="entry name" value="AstB"/>
    <property type="match status" value="1"/>
</dbReference>
<dbReference type="InterPro" id="IPR037031">
    <property type="entry name" value="AstB_sf"/>
</dbReference>
<dbReference type="InterPro" id="IPR007079">
    <property type="entry name" value="SuccinylArg_d-Hdrlase_AstB"/>
</dbReference>
<dbReference type="NCBIfam" id="TIGR03241">
    <property type="entry name" value="arg_catab_astB"/>
    <property type="match status" value="1"/>
</dbReference>
<dbReference type="NCBIfam" id="NF009789">
    <property type="entry name" value="PRK13281.1"/>
    <property type="match status" value="1"/>
</dbReference>
<dbReference type="PANTHER" id="PTHR30420">
    <property type="entry name" value="N-SUCCINYLARGININE DIHYDROLASE"/>
    <property type="match status" value="1"/>
</dbReference>
<dbReference type="PANTHER" id="PTHR30420:SF2">
    <property type="entry name" value="N-SUCCINYLARGININE DIHYDROLASE"/>
    <property type="match status" value="1"/>
</dbReference>
<dbReference type="Pfam" id="PF04996">
    <property type="entry name" value="AstB"/>
    <property type="match status" value="1"/>
</dbReference>
<dbReference type="SUPFAM" id="SSF55909">
    <property type="entry name" value="Pentein"/>
    <property type="match status" value="1"/>
</dbReference>
<proteinExistence type="inferred from homology"/>